<comment type="catalytic activity">
    <reaction>
        <text>L-seryl-[protein] + ATP = O-phospho-L-seryl-[protein] + ADP + H(+)</text>
        <dbReference type="Rhea" id="RHEA:17989"/>
        <dbReference type="Rhea" id="RHEA-COMP:9863"/>
        <dbReference type="Rhea" id="RHEA-COMP:11604"/>
        <dbReference type="ChEBI" id="CHEBI:15378"/>
        <dbReference type="ChEBI" id="CHEBI:29999"/>
        <dbReference type="ChEBI" id="CHEBI:30616"/>
        <dbReference type="ChEBI" id="CHEBI:83421"/>
        <dbReference type="ChEBI" id="CHEBI:456216"/>
        <dbReference type="EC" id="2.7.11.1"/>
    </reaction>
</comment>
<comment type="catalytic activity">
    <reaction>
        <text>L-threonyl-[protein] + ATP = O-phospho-L-threonyl-[protein] + ADP + H(+)</text>
        <dbReference type="Rhea" id="RHEA:46608"/>
        <dbReference type="Rhea" id="RHEA-COMP:11060"/>
        <dbReference type="Rhea" id="RHEA-COMP:11605"/>
        <dbReference type="ChEBI" id="CHEBI:15378"/>
        <dbReference type="ChEBI" id="CHEBI:30013"/>
        <dbReference type="ChEBI" id="CHEBI:30616"/>
        <dbReference type="ChEBI" id="CHEBI:61977"/>
        <dbReference type="ChEBI" id="CHEBI:456216"/>
        <dbReference type="EC" id="2.7.11.1"/>
    </reaction>
</comment>
<comment type="subcellular location">
    <subcellularLocation>
        <location evidence="1">Cell membrane</location>
        <topology evidence="1">Single-pass type I membrane protein</topology>
    </subcellularLocation>
</comment>
<comment type="alternative products">
    <event type="alternative splicing"/>
    <isoform>
        <id>Q9SXB3-1</id>
        <name>1</name>
        <sequence type="displayed"/>
    </isoform>
    <isoform>
        <id>Q9SXB3-2</id>
        <name>2</name>
        <sequence type="described" ref="VSP_040152"/>
    </isoform>
    <isoform>
        <id>Q9SXB3-3</id>
        <name>3</name>
        <sequence type="described" ref="VSP_040153"/>
    </isoform>
</comment>
<comment type="similarity">
    <text evidence="5">Belongs to the protein kinase superfamily. Ser/Thr protein kinase family.</text>
</comment>
<protein>
    <recommendedName>
        <fullName>G-type lectin S-receptor-like serine/threonine-protein kinase At1g11280</fullName>
        <ecNumber>2.7.11.1</ecNumber>
    </recommendedName>
</protein>
<dbReference type="EC" id="2.7.11.1"/>
<dbReference type="EMBL" id="AF083714">
    <property type="protein sequence ID" value="AAN60272.1"/>
    <property type="molecule type" value="mRNA"/>
</dbReference>
<dbReference type="EMBL" id="AC007259">
    <property type="protein sequence ID" value="AAD49994.1"/>
    <property type="molecule type" value="Genomic_DNA"/>
</dbReference>
<dbReference type="EMBL" id="CP002684">
    <property type="protein sequence ID" value="AEE28709.1"/>
    <property type="molecule type" value="Genomic_DNA"/>
</dbReference>
<dbReference type="EMBL" id="CP002684">
    <property type="protein sequence ID" value="AEE28710.1"/>
    <property type="molecule type" value="Genomic_DNA"/>
</dbReference>
<dbReference type="EMBL" id="CP002684">
    <property type="protein sequence ID" value="AEE28711.1"/>
    <property type="molecule type" value="Genomic_DNA"/>
</dbReference>
<dbReference type="EMBL" id="AY056250">
    <property type="protein sequence ID" value="AAL07099.1"/>
    <property type="molecule type" value="mRNA"/>
</dbReference>
<dbReference type="EMBL" id="AY062482">
    <property type="protein sequence ID" value="AAL32560.1"/>
    <property type="molecule type" value="mRNA"/>
</dbReference>
<dbReference type="PIR" id="G86246">
    <property type="entry name" value="G86246"/>
</dbReference>
<dbReference type="RefSeq" id="NP_563887.1">
    <molecule id="Q9SXB3-2"/>
    <property type="nucleotide sequence ID" value="NM_101001.3"/>
</dbReference>
<dbReference type="RefSeq" id="NP_849636.1">
    <molecule id="Q9SXB3-1"/>
    <property type="nucleotide sequence ID" value="NM_179305.3"/>
</dbReference>
<dbReference type="RefSeq" id="NP_849637.1">
    <molecule id="Q9SXB3-3"/>
    <property type="nucleotide sequence ID" value="NM_179306.2"/>
</dbReference>
<dbReference type="SMR" id="Q9SXB3"/>
<dbReference type="FunCoup" id="Q9SXB3">
    <property type="interactions" value="97"/>
</dbReference>
<dbReference type="GlyGen" id="Q9SXB3">
    <property type="glycosylation" value="9 sites"/>
</dbReference>
<dbReference type="PaxDb" id="3702-AT1G11280.1"/>
<dbReference type="ProteomicsDB" id="242414">
    <molecule id="Q9SXB3-1"/>
</dbReference>
<dbReference type="EnsemblPlants" id="AT1G11280.1">
    <molecule id="Q9SXB3-2"/>
    <property type="protein sequence ID" value="AT1G11280.1"/>
    <property type="gene ID" value="AT1G11280"/>
</dbReference>
<dbReference type="EnsemblPlants" id="AT1G11280.2">
    <molecule id="Q9SXB3-1"/>
    <property type="protein sequence ID" value="AT1G11280.2"/>
    <property type="gene ID" value="AT1G11280"/>
</dbReference>
<dbReference type="EnsemblPlants" id="AT1G11280.3">
    <molecule id="Q9SXB3-3"/>
    <property type="protein sequence ID" value="AT1G11280.3"/>
    <property type="gene ID" value="AT1G11280"/>
</dbReference>
<dbReference type="GeneID" id="837670"/>
<dbReference type="Gramene" id="AT1G11280.1">
    <molecule id="Q9SXB3-2"/>
    <property type="protein sequence ID" value="AT1G11280.1"/>
    <property type="gene ID" value="AT1G11280"/>
</dbReference>
<dbReference type="Gramene" id="AT1G11280.2">
    <molecule id="Q9SXB3-1"/>
    <property type="protein sequence ID" value="AT1G11280.2"/>
    <property type="gene ID" value="AT1G11280"/>
</dbReference>
<dbReference type="Gramene" id="AT1G11280.3">
    <molecule id="Q9SXB3-3"/>
    <property type="protein sequence ID" value="AT1G11280.3"/>
    <property type="gene ID" value="AT1G11280"/>
</dbReference>
<dbReference type="KEGG" id="ath:AT1G11280"/>
<dbReference type="Araport" id="AT1G11280"/>
<dbReference type="TAIR" id="AT1G11280"/>
<dbReference type="InParanoid" id="Q9SXB3"/>
<dbReference type="PhylomeDB" id="Q9SXB3"/>
<dbReference type="PRO" id="PR:Q9SXB3"/>
<dbReference type="Proteomes" id="UP000006548">
    <property type="component" value="Chromosome 1"/>
</dbReference>
<dbReference type="ExpressionAtlas" id="Q9SXB3">
    <property type="expression patterns" value="baseline and differential"/>
</dbReference>
<dbReference type="GO" id="GO:0005886">
    <property type="term" value="C:plasma membrane"/>
    <property type="evidence" value="ECO:0007669"/>
    <property type="project" value="UniProtKB-SubCell"/>
</dbReference>
<dbReference type="GO" id="GO:0005524">
    <property type="term" value="F:ATP binding"/>
    <property type="evidence" value="ECO:0007669"/>
    <property type="project" value="UniProtKB-KW"/>
</dbReference>
<dbReference type="GO" id="GO:0005516">
    <property type="term" value="F:calmodulin binding"/>
    <property type="evidence" value="ECO:0000250"/>
    <property type="project" value="UniProtKB"/>
</dbReference>
<dbReference type="GO" id="GO:0030246">
    <property type="term" value="F:carbohydrate binding"/>
    <property type="evidence" value="ECO:0007669"/>
    <property type="project" value="UniProtKB-KW"/>
</dbReference>
<dbReference type="GO" id="GO:0106310">
    <property type="term" value="F:protein serine kinase activity"/>
    <property type="evidence" value="ECO:0007669"/>
    <property type="project" value="RHEA"/>
</dbReference>
<dbReference type="GO" id="GO:0004674">
    <property type="term" value="F:protein serine/threonine kinase activity"/>
    <property type="evidence" value="ECO:0000250"/>
    <property type="project" value="UniProtKB"/>
</dbReference>
<dbReference type="GO" id="GO:0031625">
    <property type="term" value="F:ubiquitin protein ligase binding"/>
    <property type="evidence" value="ECO:0007669"/>
    <property type="project" value="UniProtKB-ARBA"/>
</dbReference>
<dbReference type="GO" id="GO:0048544">
    <property type="term" value="P:recognition of pollen"/>
    <property type="evidence" value="ECO:0007669"/>
    <property type="project" value="InterPro"/>
</dbReference>
<dbReference type="CDD" id="cd00028">
    <property type="entry name" value="B_lectin"/>
    <property type="match status" value="1"/>
</dbReference>
<dbReference type="CDD" id="cd01098">
    <property type="entry name" value="PAN_AP_plant"/>
    <property type="match status" value="1"/>
</dbReference>
<dbReference type="CDD" id="cd14066">
    <property type="entry name" value="STKc_IRAK"/>
    <property type="match status" value="1"/>
</dbReference>
<dbReference type="FunFam" id="1.10.510.10:FF:000345">
    <property type="entry name" value="G-type lectin S-receptor-like serine/threonine-protein kinase"/>
    <property type="match status" value="1"/>
</dbReference>
<dbReference type="FunFam" id="2.90.10.10:FF:000003">
    <property type="entry name" value="G-type lectin S-receptor-like serine/threonine-protein kinase"/>
    <property type="match status" value="1"/>
</dbReference>
<dbReference type="FunFam" id="3.30.200.20:FF:000401">
    <property type="entry name" value="G-type lectin S-receptor-like serine/threonine-protein kinase SD1-29"/>
    <property type="match status" value="1"/>
</dbReference>
<dbReference type="Gene3D" id="2.90.10.10">
    <property type="entry name" value="Bulb-type lectin domain"/>
    <property type="match status" value="1"/>
</dbReference>
<dbReference type="Gene3D" id="3.30.200.20">
    <property type="entry name" value="Phosphorylase Kinase, domain 1"/>
    <property type="match status" value="1"/>
</dbReference>
<dbReference type="Gene3D" id="1.10.510.10">
    <property type="entry name" value="Transferase(Phosphotransferase) domain 1"/>
    <property type="match status" value="1"/>
</dbReference>
<dbReference type="InterPro" id="IPR001480">
    <property type="entry name" value="Bulb-type_lectin_dom"/>
</dbReference>
<dbReference type="InterPro" id="IPR036426">
    <property type="entry name" value="Bulb-type_lectin_dom_sf"/>
</dbReference>
<dbReference type="InterPro" id="IPR011009">
    <property type="entry name" value="Kinase-like_dom_sf"/>
</dbReference>
<dbReference type="InterPro" id="IPR003609">
    <property type="entry name" value="Pan_app"/>
</dbReference>
<dbReference type="InterPro" id="IPR000719">
    <property type="entry name" value="Prot_kinase_dom"/>
</dbReference>
<dbReference type="InterPro" id="IPR021820">
    <property type="entry name" value="S-locus_recpt_kinase_C"/>
</dbReference>
<dbReference type="InterPro" id="IPR000858">
    <property type="entry name" value="S_locus_glycoprot_dom"/>
</dbReference>
<dbReference type="InterPro" id="IPR001245">
    <property type="entry name" value="Ser-Thr/Tyr_kinase_cat_dom"/>
</dbReference>
<dbReference type="InterPro" id="IPR008271">
    <property type="entry name" value="Ser/Thr_kinase_AS"/>
</dbReference>
<dbReference type="InterPro" id="IPR024171">
    <property type="entry name" value="SRK-like_kinase"/>
</dbReference>
<dbReference type="PANTHER" id="PTHR27002">
    <property type="entry name" value="RECEPTOR-LIKE SERINE/THREONINE-PROTEIN KINASE SD1-8"/>
    <property type="match status" value="1"/>
</dbReference>
<dbReference type="PANTHER" id="PTHR27002:SF985">
    <property type="entry name" value="RECEPTOR-LIKE SERINE_THREONINE-PROTEIN KINASE"/>
    <property type="match status" value="1"/>
</dbReference>
<dbReference type="Pfam" id="PF01453">
    <property type="entry name" value="B_lectin"/>
    <property type="match status" value="1"/>
</dbReference>
<dbReference type="Pfam" id="PF11883">
    <property type="entry name" value="DUF3403"/>
    <property type="match status" value="1"/>
</dbReference>
<dbReference type="Pfam" id="PF08276">
    <property type="entry name" value="PAN_2"/>
    <property type="match status" value="1"/>
</dbReference>
<dbReference type="Pfam" id="PF07714">
    <property type="entry name" value="PK_Tyr_Ser-Thr"/>
    <property type="match status" value="1"/>
</dbReference>
<dbReference type="Pfam" id="PF00954">
    <property type="entry name" value="S_locus_glycop"/>
    <property type="match status" value="1"/>
</dbReference>
<dbReference type="PIRSF" id="PIRSF000641">
    <property type="entry name" value="SRK"/>
    <property type="match status" value="1"/>
</dbReference>
<dbReference type="SMART" id="SM00108">
    <property type="entry name" value="B_lectin"/>
    <property type="match status" value="1"/>
</dbReference>
<dbReference type="SMART" id="SM00473">
    <property type="entry name" value="PAN_AP"/>
    <property type="match status" value="1"/>
</dbReference>
<dbReference type="SMART" id="SM00220">
    <property type="entry name" value="S_TKc"/>
    <property type="match status" value="1"/>
</dbReference>
<dbReference type="SUPFAM" id="SSF51110">
    <property type="entry name" value="alpha-D-mannose-specific plant lectins"/>
    <property type="match status" value="1"/>
</dbReference>
<dbReference type="SUPFAM" id="SSF56112">
    <property type="entry name" value="Protein kinase-like (PK-like)"/>
    <property type="match status" value="1"/>
</dbReference>
<dbReference type="PROSITE" id="PS50927">
    <property type="entry name" value="BULB_LECTIN"/>
    <property type="match status" value="1"/>
</dbReference>
<dbReference type="PROSITE" id="PS50948">
    <property type="entry name" value="PAN"/>
    <property type="match status" value="1"/>
</dbReference>
<dbReference type="PROSITE" id="PS50011">
    <property type="entry name" value="PROTEIN_KINASE_DOM"/>
    <property type="match status" value="1"/>
</dbReference>
<dbReference type="PROSITE" id="PS00108">
    <property type="entry name" value="PROTEIN_KINASE_ST"/>
    <property type="match status" value="1"/>
</dbReference>
<evidence type="ECO:0000250" key="1"/>
<evidence type="ECO:0000250" key="2">
    <source>
        <dbReference type="UniProtKB" id="Q9LPZ9"/>
    </source>
</evidence>
<evidence type="ECO:0000255" key="3"/>
<evidence type="ECO:0000255" key="4">
    <source>
        <dbReference type="PROSITE-ProRule" id="PRU00038"/>
    </source>
</evidence>
<evidence type="ECO:0000255" key="5">
    <source>
        <dbReference type="PROSITE-ProRule" id="PRU00159"/>
    </source>
</evidence>
<evidence type="ECO:0000255" key="6">
    <source>
        <dbReference type="PROSITE-ProRule" id="PRU00315"/>
    </source>
</evidence>
<evidence type="ECO:0000255" key="7">
    <source>
        <dbReference type="PROSITE-ProRule" id="PRU10027"/>
    </source>
</evidence>
<evidence type="ECO:0000303" key="8">
    <source>
    </source>
</evidence>
<evidence type="ECO:0000303" key="9">
    <source ref="1"/>
</evidence>
<evidence type="ECO:0000305" key="10"/>
<organism>
    <name type="scientific">Arabidopsis thaliana</name>
    <name type="common">Mouse-ear cress</name>
    <dbReference type="NCBI Taxonomy" id="3702"/>
    <lineage>
        <taxon>Eukaryota</taxon>
        <taxon>Viridiplantae</taxon>
        <taxon>Streptophyta</taxon>
        <taxon>Embryophyta</taxon>
        <taxon>Tracheophyta</taxon>
        <taxon>Spermatophyta</taxon>
        <taxon>Magnoliopsida</taxon>
        <taxon>eudicotyledons</taxon>
        <taxon>Gunneridae</taxon>
        <taxon>Pentapetalae</taxon>
        <taxon>rosids</taxon>
        <taxon>malvids</taxon>
        <taxon>Brassicales</taxon>
        <taxon>Brassicaceae</taxon>
        <taxon>Camelineae</taxon>
        <taxon>Arabidopsis</taxon>
    </lineage>
</organism>
<name>Y1112_ARATH</name>
<feature type="signal peptide" evidence="3">
    <location>
        <begin position="1"/>
        <end position="28"/>
    </location>
</feature>
<feature type="chain" id="PRO_0000401306" description="G-type lectin S-receptor-like serine/threonine-protein kinase At1g11280">
    <location>
        <begin position="29"/>
        <end position="820"/>
    </location>
</feature>
<feature type="topological domain" description="Extracellular" evidence="3">
    <location>
        <begin position="29"/>
        <end position="434"/>
    </location>
</feature>
<feature type="transmembrane region" description="Helical" evidence="3">
    <location>
        <begin position="435"/>
        <end position="455"/>
    </location>
</feature>
<feature type="topological domain" description="Cytoplasmic" evidence="3">
    <location>
        <begin position="456"/>
        <end position="820"/>
    </location>
</feature>
<feature type="domain" description="Bulb-type lectin" evidence="4">
    <location>
        <begin position="29"/>
        <end position="148"/>
    </location>
</feature>
<feature type="domain" description="EGF-like">
    <location>
        <begin position="283"/>
        <end position="319"/>
    </location>
</feature>
<feature type="domain" description="PAN" evidence="6">
    <location>
        <begin position="338"/>
        <end position="422"/>
    </location>
</feature>
<feature type="domain" description="Protein kinase" evidence="5">
    <location>
        <begin position="505"/>
        <end position="792"/>
    </location>
</feature>
<feature type="region of interest" description="CaM-binding" evidence="1">
    <location>
        <begin position="594"/>
        <end position="611"/>
    </location>
</feature>
<feature type="active site" description="Proton acceptor" evidence="5 7">
    <location>
        <position position="630"/>
    </location>
</feature>
<feature type="binding site" evidence="5">
    <location>
        <begin position="511"/>
        <end position="519"/>
    </location>
    <ligand>
        <name>ATP</name>
        <dbReference type="ChEBI" id="CHEBI:30616"/>
    </ligand>
</feature>
<feature type="binding site" evidence="5">
    <location>
        <position position="533"/>
    </location>
    <ligand>
        <name>ATP</name>
        <dbReference type="ChEBI" id="CHEBI:30616"/>
    </ligand>
</feature>
<feature type="modified residue" description="Phosphoserine" evidence="2">
    <location>
        <position position="539"/>
    </location>
</feature>
<feature type="modified residue" description="Phosphoserine" evidence="2">
    <location>
        <position position="554"/>
    </location>
</feature>
<feature type="modified residue" description="Phosphoserine" evidence="2">
    <location>
        <position position="634"/>
    </location>
</feature>
<feature type="modified residue" description="Phosphoserine" evidence="2">
    <location>
        <position position="647"/>
    </location>
</feature>
<feature type="modified residue" description="Phosphothreonine" evidence="2">
    <location>
        <position position="664"/>
    </location>
</feature>
<feature type="modified residue" description="Phosphoserine" evidence="2">
    <location>
        <position position="707"/>
    </location>
</feature>
<feature type="modified residue" description="Phosphoserine" evidence="2">
    <location>
        <position position="708"/>
    </location>
</feature>
<feature type="modified residue" description="Phosphoserine" evidence="2">
    <location>
        <position position="808"/>
    </location>
</feature>
<feature type="modified residue" description="Phosphothreonine" evidence="2">
    <location>
        <position position="815"/>
    </location>
</feature>
<feature type="glycosylation site" description="N-linked (GlcNAc...) asparagine" evidence="3">
    <location>
        <position position="57"/>
    </location>
</feature>
<feature type="glycosylation site" description="N-linked (GlcNAc...) asparagine" evidence="3">
    <location>
        <position position="92"/>
    </location>
</feature>
<feature type="glycosylation site" description="N-linked (GlcNAc...) asparagine" evidence="3">
    <location>
        <position position="98"/>
    </location>
</feature>
<feature type="glycosylation site" description="N-linked (GlcNAc...) asparagine" evidence="3">
    <location>
        <position position="241"/>
    </location>
</feature>
<feature type="glycosylation site" description="N-linked (GlcNAc...) asparagine" evidence="3">
    <location>
        <position position="272"/>
    </location>
</feature>
<feature type="glycosylation site" description="N-linked (GlcNAc...) asparagine" evidence="3">
    <location>
        <position position="325"/>
    </location>
</feature>
<feature type="glycosylation site" description="N-linked (GlcNAc...) asparagine" evidence="3">
    <location>
        <position position="341"/>
    </location>
</feature>
<feature type="glycosylation site" description="N-linked (GlcNAc...) asparagine" evidence="3">
    <location>
        <position position="384"/>
    </location>
</feature>
<feature type="disulfide bond" evidence="1">
    <location>
        <begin position="287"/>
        <end position="299"/>
    </location>
</feature>
<feature type="disulfide bond" evidence="1">
    <location>
        <begin position="293"/>
        <end position="307"/>
    </location>
</feature>
<feature type="disulfide bond" evidence="1">
    <location>
        <begin position="377"/>
        <end position="398"/>
    </location>
</feature>
<feature type="disulfide bond" evidence="1">
    <location>
        <begin position="381"/>
        <end position="387"/>
    </location>
</feature>
<feature type="splice variant" id="VSP_040152" description="In isoform 2." evidence="8">
    <original>M</original>
    <variation>MDLKENSFEHM</variation>
    <location>
        <position position="1"/>
    </location>
</feature>
<feature type="splice variant" id="VSP_040153" description="In isoform 3." evidence="9">
    <location>
        <begin position="464"/>
        <end position="475"/>
    </location>
</feature>
<feature type="sequence conflict" description="In Ref. 1; AAN60272." evidence="10" ref="1">
    <original>W</original>
    <variation>C</variation>
    <location>
        <position position="15"/>
    </location>
</feature>
<feature type="sequence conflict" description="In Ref. 1; AAN60272." evidence="10" ref="1">
    <original>Q</original>
    <variation>H</variation>
    <location>
        <position position="60"/>
    </location>
</feature>
<feature type="sequence conflict" description="In Ref. 1; AAN60272." evidence="10" ref="1">
    <original>T</original>
    <variation>N</variation>
    <location>
        <position position="88"/>
    </location>
</feature>
<feature type="sequence conflict" description="In Ref. 1; AAN60272." evidence="10" ref="1">
    <original>I</original>
    <variation>V</variation>
    <location>
        <position position="409"/>
    </location>
</feature>
<feature type="sequence conflict" description="In Ref. 1; AAN60272." evidence="10" ref="1">
    <original>S</original>
    <variation>N</variation>
    <location>
        <position position="430"/>
    </location>
</feature>
<feature type="sequence conflict" description="In Ref. 1; AAN60272." evidence="10" ref="1">
    <original>A</original>
    <variation>T</variation>
    <location>
        <position position="500"/>
    </location>
</feature>
<feature type="sequence conflict" description="In Ref. 4; AAL07099." evidence="10" ref="4">
    <original>T</original>
    <variation>A</variation>
    <location>
        <position position="594"/>
    </location>
</feature>
<feature type="sequence conflict" description="In Ref. 1; AAN60272." evidence="10" ref="1">
    <original>D</original>
    <variation>E</variation>
    <location>
        <position position="640"/>
    </location>
</feature>
<feature type="sequence conflict" description="In Ref. 1; AAN60272." evidence="10" ref="1">
    <original>QDNTRK</original>
    <variation>KTTLVR</variation>
    <location>
        <begin position="661"/>
        <end position="666"/>
    </location>
</feature>
<feature type="sequence conflict" description="In Ref. 1; AAN60272." evidence="10" ref="1">
    <original>V</original>
    <variation>I</variation>
    <location>
        <position position="766"/>
    </location>
</feature>
<keyword id="KW-0025">Alternative splicing</keyword>
<keyword id="KW-0067">ATP-binding</keyword>
<keyword id="KW-1003">Cell membrane</keyword>
<keyword id="KW-1015">Disulfide bond</keyword>
<keyword id="KW-0245">EGF-like domain</keyword>
<keyword id="KW-0325">Glycoprotein</keyword>
<keyword id="KW-0418">Kinase</keyword>
<keyword id="KW-0430">Lectin</keyword>
<keyword id="KW-0472">Membrane</keyword>
<keyword id="KW-0547">Nucleotide-binding</keyword>
<keyword id="KW-0597">Phosphoprotein</keyword>
<keyword id="KW-0675">Receptor</keyword>
<keyword id="KW-1185">Reference proteome</keyword>
<keyword id="KW-0723">Serine/threonine-protein kinase</keyword>
<keyword id="KW-0732">Signal</keyword>
<keyword id="KW-0808">Transferase</keyword>
<keyword id="KW-0812">Transmembrane</keyword>
<keyword id="KW-1133">Transmembrane helix</keyword>
<accession>Q9SXB3</accession>
<accession>Q3EDE4</accession>
<accession>Q8H7E6</accession>
<accession>Q93ZU9</accession>
<sequence length="820" mass="91337">MGIHLGEIGIVLFPWFLWLSLFLSCGYAAITISSPLTLGQTLSSPGGFYELGFFSPNNSQNQYVGIWFKKITPRVVVWVANREKPITTPVANLTISRNGSLILLDSSKNVVWSTRRPSISNKCHAKLLDTGNLVIVDDVSENLLWQSFENPGDTMLPYSSLMYNLATGEKRVLSSWKSHTDPSPGDFVVRLTPQVPAQIVTMRGSSVYKRSGPWAKTGFTGVPLMDESYTSPFSLSQDVGNGTGLFSYLQRSSELTRVIITSEGYLKTFRYNGTGWVLDFITPANLCDLYGACGPFGLCVTSNPTKCKCMKGFVPKYKEEWKRGNMTSGCMRRTELSCQANLSTKTQGKGVDVFYRLANVKPPDLYEYASFVDADQCHQGCLSNCSCSAFAYITGIGCLLWNHELIDTIRYSVGGEFLSIRLASSELAGSRRTKIIVGSISLSIFVILAFGSYKYWRYRAKQNVGPTWAFFNNSQDSWKNGLEPQEISGLTFFEMNTIRAATNNFNVSNKLGQGGFGPVYKGTLSDKKDIAVKRLSSSSGQGTEEFMNEIKLISKLQHRNLVRLLGCCIDGEEKLLIYEFLVNKSLDTFLFDLTLKLQIDWPKRFNIIQGVSRGLLYLHRDSCMRVIHRDLKVSNILLDDKMNPKISDFGLARMFQGTQHQDNTRKVVGTLGYMSPEYAWTGMFSEKSDIYAFGVLLLEIISGKKISSFCCGEEGKTLLGHAWECWLETGGVDLLDEDISSSCSPVEVEVARCVQIGLLCIQQQAVDRPNIAQVVTMMTSATDLPRPKQPLFALQIQDQESVVSVSKSVNHVTQTEIYGR</sequence>
<proteinExistence type="evidence at transcript level"/>
<reference key="1">
    <citation type="submission" date="1998-08" db="EMBL/GenBank/DDBJ databases">
        <title>Signal peptide selection derived cDNAs from Arabidopsis thaliana leaves and guard cells.</title>
        <authorList>
            <person name="Stracke R."/>
            <person name="Palme K."/>
        </authorList>
    </citation>
    <scope>NUCLEOTIDE SEQUENCE [MRNA] (ISOFORM 3)</scope>
</reference>
<reference key="2">
    <citation type="journal article" date="2000" name="Nature">
        <title>Sequence and analysis of chromosome 1 of the plant Arabidopsis thaliana.</title>
        <authorList>
            <person name="Theologis A."/>
            <person name="Ecker J.R."/>
            <person name="Palm C.J."/>
            <person name="Federspiel N.A."/>
            <person name="Kaul S."/>
            <person name="White O."/>
            <person name="Alonso J."/>
            <person name="Altafi H."/>
            <person name="Araujo R."/>
            <person name="Bowman C.L."/>
            <person name="Brooks S.Y."/>
            <person name="Buehler E."/>
            <person name="Chan A."/>
            <person name="Chao Q."/>
            <person name="Chen H."/>
            <person name="Cheuk R.F."/>
            <person name="Chin C.W."/>
            <person name="Chung M.K."/>
            <person name="Conn L."/>
            <person name="Conway A.B."/>
            <person name="Conway A.R."/>
            <person name="Creasy T.H."/>
            <person name="Dewar K."/>
            <person name="Dunn P."/>
            <person name="Etgu P."/>
            <person name="Feldblyum T.V."/>
            <person name="Feng J.-D."/>
            <person name="Fong B."/>
            <person name="Fujii C.Y."/>
            <person name="Gill J.E."/>
            <person name="Goldsmith A.D."/>
            <person name="Haas B."/>
            <person name="Hansen N.F."/>
            <person name="Hughes B."/>
            <person name="Huizar L."/>
            <person name="Hunter J.L."/>
            <person name="Jenkins J."/>
            <person name="Johnson-Hopson C."/>
            <person name="Khan S."/>
            <person name="Khaykin E."/>
            <person name="Kim C.J."/>
            <person name="Koo H.L."/>
            <person name="Kremenetskaia I."/>
            <person name="Kurtz D.B."/>
            <person name="Kwan A."/>
            <person name="Lam B."/>
            <person name="Langin-Hooper S."/>
            <person name="Lee A."/>
            <person name="Lee J.M."/>
            <person name="Lenz C.A."/>
            <person name="Li J.H."/>
            <person name="Li Y.-P."/>
            <person name="Lin X."/>
            <person name="Liu S.X."/>
            <person name="Liu Z.A."/>
            <person name="Luros J.S."/>
            <person name="Maiti R."/>
            <person name="Marziali A."/>
            <person name="Militscher J."/>
            <person name="Miranda M."/>
            <person name="Nguyen M."/>
            <person name="Nierman W.C."/>
            <person name="Osborne B.I."/>
            <person name="Pai G."/>
            <person name="Peterson J."/>
            <person name="Pham P.K."/>
            <person name="Rizzo M."/>
            <person name="Rooney T."/>
            <person name="Rowley D."/>
            <person name="Sakano H."/>
            <person name="Salzberg S.L."/>
            <person name="Schwartz J.R."/>
            <person name="Shinn P."/>
            <person name="Southwick A.M."/>
            <person name="Sun H."/>
            <person name="Tallon L.J."/>
            <person name="Tambunga G."/>
            <person name="Toriumi M.J."/>
            <person name="Town C.D."/>
            <person name="Utterback T."/>
            <person name="Van Aken S."/>
            <person name="Vaysberg M."/>
            <person name="Vysotskaia V.S."/>
            <person name="Walker M."/>
            <person name="Wu D."/>
            <person name="Yu G."/>
            <person name="Fraser C.M."/>
            <person name="Venter J.C."/>
            <person name="Davis R.W."/>
        </authorList>
    </citation>
    <scope>NUCLEOTIDE SEQUENCE [LARGE SCALE GENOMIC DNA]</scope>
    <source>
        <strain>cv. Columbia</strain>
    </source>
</reference>
<reference key="3">
    <citation type="journal article" date="2017" name="Plant J.">
        <title>Araport11: a complete reannotation of the Arabidopsis thaliana reference genome.</title>
        <authorList>
            <person name="Cheng C.Y."/>
            <person name="Krishnakumar V."/>
            <person name="Chan A.P."/>
            <person name="Thibaud-Nissen F."/>
            <person name="Schobel S."/>
            <person name="Town C.D."/>
        </authorList>
    </citation>
    <scope>GENOME REANNOTATION</scope>
    <source>
        <strain>cv. Columbia</strain>
    </source>
</reference>
<reference key="4">
    <citation type="journal article" date="2003" name="Science">
        <title>Empirical analysis of transcriptional activity in the Arabidopsis genome.</title>
        <authorList>
            <person name="Yamada K."/>
            <person name="Lim J."/>
            <person name="Dale J.M."/>
            <person name="Chen H."/>
            <person name="Shinn P."/>
            <person name="Palm C.J."/>
            <person name="Southwick A.M."/>
            <person name="Wu H.C."/>
            <person name="Kim C.J."/>
            <person name="Nguyen M."/>
            <person name="Pham P.K."/>
            <person name="Cheuk R.F."/>
            <person name="Karlin-Newmann G."/>
            <person name="Liu S.X."/>
            <person name="Lam B."/>
            <person name="Sakano H."/>
            <person name="Wu T."/>
            <person name="Yu G."/>
            <person name="Miranda M."/>
            <person name="Quach H.L."/>
            <person name="Tripp M."/>
            <person name="Chang C.H."/>
            <person name="Lee J.M."/>
            <person name="Toriumi M.J."/>
            <person name="Chan M.M."/>
            <person name="Tang C.C."/>
            <person name="Onodera C.S."/>
            <person name="Deng J.M."/>
            <person name="Akiyama K."/>
            <person name="Ansari Y."/>
            <person name="Arakawa T."/>
            <person name="Banh J."/>
            <person name="Banno F."/>
            <person name="Bowser L."/>
            <person name="Brooks S.Y."/>
            <person name="Carninci P."/>
            <person name="Chao Q."/>
            <person name="Choy N."/>
            <person name="Enju A."/>
            <person name="Goldsmith A.D."/>
            <person name="Gurjal M."/>
            <person name="Hansen N.F."/>
            <person name="Hayashizaki Y."/>
            <person name="Johnson-Hopson C."/>
            <person name="Hsuan V.W."/>
            <person name="Iida K."/>
            <person name="Karnes M."/>
            <person name="Khan S."/>
            <person name="Koesema E."/>
            <person name="Ishida J."/>
            <person name="Jiang P.X."/>
            <person name="Jones T."/>
            <person name="Kawai J."/>
            <person name="Kamiya A."/>
            <person name="Meyers C."/>
            <person name="Nakajima M."/>
            <person name="Narusaka M."/>
            <person name="Seki M."/>
            <person name="Sakurai T."/>
            <person name="Satou M."/>
            <person name="Tamse R."/>
            <person name="Vaysberg M."/>
            <person name="Wallender E.K."/>
            <person name="Wong C."/>
            <person name="Yamamura Y."/>
            <person name="Yuan S."/>
            <person name="Shinozaki K."/>
            <person name="Davis R.W."/>
            <person name="Theologis A."/>
            <person name="Ecker J.R."/>
        </authorList>
    </citation>
    <scope>NUCLEOTIDE SEQUENCE [LARGE SCALE MRNA] (ISOFORMS 1 AND 2)</scope>
    <source>
        <strain>cv. Columbia</strain>
    </source>
</reference>
<gene>
    <name type="ordered locus">At1g11280</name>
    <name type="ORF">T28P6.7</name>
</gene>